<name>RF1_SHEB9</name>
<dbReference type="EMBL" id="CP000891">
    <property type="protein sequence ID" value="ABX50897.1"/>
    <property type="molecule type" value="Genomic_DNA"/>
</dbReference>
<dbReference type="RefSeq" id="WP_006084076.1">
    <property type="nucleotide sequence ID" value="NC_009997.1"/>
</dbReference>
<dbReference type="SMR" id="A9L2D4"/>
<dbReference type="GeneID" id="11774973"/>
<dbReference type="KEGG" id="sbn:Sbal195_3737"/>
<dbReference type="HOGENOM" id="CLU_036856_0_1_6"/>
<dbReference type="Proteomes" id="UP000000770">
    <property type="component" value="Chromosome"/>
</dbReference>
<dbReference type="GO" id="GO:0005737">
    <property type="term" value="C:cytoplasm"/>
    <property type="evidence" value="ECO:0007669"/>
    <property type="project" value="UniProtKB-SubCell"/>
</dbReference>
<dbReference type="GO" id="GO:0016149">
    <property type="term" value="F:translation release factor activity, codon specific"/>
    <property type="evidence" value="ECO:0007669"/>
    <property type="project" value="UniProtKB-UniRule"/>
</dbReference>
<dbReference type="FunFam" id="3.30.160.20:FF:000004">
    <property type="entry name" value="Peptide chain release factor 1"/>
    <property type="match status" value="1"/>
</dbReference>
<dbReference type="FunFam" id="3.30.70.1660:FF:000002">
    <property type="entry name" value="Peptide chain release factor 1"/>
    <property type="match status" value="1"/>
</dbReference>
<dbReference type="FunFam" id="3.30.70.1660:FF:000004">
    <property type="entry name" value="Peptide chain release factor 1"/>
    <property type="match status" value="1"/>
</dbReference>
<dbReference type="Gene3D" id="3.30.160.20">
    <property type="match status" value="1"/>
</dbReference>
<dbReference type="Gene3D" id="3.30.70.1660">
    <property type="match status" value="2"/>
</dbReference>
<dbReference type="Gene3D" id="6.10.140.1950">
    <property type="match status" value="1"/>
</dbReference>
<dbReference type="HAMAP" id="MF_00093">
    <property type="entry name" value="Rel_fac_1"/>
    <property type="match status" value="1"/>
</dbReference>
<dbReference type="InterPro" id="IPR005139">
    <property type="entry name" value="PCRF"/>
</dbReference>
<dbReference type="InterPro" id="IPR000352">
    <property type="entry name" value="Pep_chain_release_fac_I"/>
</dbReference>
<dbReference type="InterPro" id="IPR045853">
    <property type="entry name" value="Pep_chain_release_fac_I_sf"/>
</dbReference>
<dbReference type="InterPro" id="IPR050057">
    <property type="entry name" value="Prokaryotic/Mito_RF"/>
</dbReference>
<dbReference type="InterPro" id="IPR004373">
    <property type="entry name" value="RF-1"/>
</dbReference>
<dbReference type="NCBIfam" id="TIGR00019">
    <property type="entry name" value="prfA"/>
    <property type="match status" value="1"/>
</dbReference>
<dbReference type="NCBIfam" id="NF001859">
    <property type="entry name" value="PRK00591.1"/>
    <property type="match status" value="1"/>
</dbReference>
<dbReference type="PANTHER" id="PTHR43804">
    <property type="entry name" value="LD18447P"/>
    <property type="match status" value="1"/>
</dbReference>
<dbReference type="PANTHER" id="PTHR43804:SF7">
    <property type="entry name" value="LD18447P"/>
    <property type="match status" value="1"/>
</dbReference>
<dbReference type="Pfam" id="PF03462">
    <property type="entry name" value="PCRF"/>
    <property type="match status" value="1"/>
</dbReference>
<dbReference type="Pfam" id="PF00472">
    <property type="entry name" value="RF-1"/>
    <property type="match status" value="1"/>
</dbReference>
<dbReference type="SMART" id="SM00937">
    <property type="entry name" value="PCRF"/>
    <property type="match status" value="1"/>
</dbReference>
<dbReference type="SUPFAM" id="SSF75620">
    <property type="entry name" value="Release factor"/>
    <property type="match status" value="1"/>
</dbReference>
<dbReference type="PROSITE" id="PS00745">
    <property type="entry name" value="RF_PROK_I"/>
    <property type="match status" value="1"/>
</dbReference>
<comment type="function">
    <text evidence="1">Peptide chain release factor 1 directs the termination of translation in response to the peptide chain termination codons UAG and UAA.</text>
</comment>
<comment type="subcellular location">
    <subcellularLocation>
        <location evidence="1">Cytoplasm</location>
    </subcellularLocation>
</comment>
<comment type="PTM">
    <text evidence="1">Methylated by PrmC. Methylation increases the termination efficiency of RF1.</text>
</comment>
<comment type="similarity">
    <text evidence="1">Belongs to the prokaryotic/mitochondrial release factor family.</text>
</comment>
<organism>
    <name type="scientific">Shewanella baltica (strain OS195)</name>
    <dbReference type="NCBI Taxonomy" id="399599"/>
    <lineage>
        <taxon>Bacteria</taxon>
        <taxon>Pseudomonadati</taxon>
        <taxon>Pseudomonadota</taxon>
        <taxon>Gammaproteobacteria</taxon>
        <taxon>Alteromonadales</taxon>
        <taxon>Shewanellaceae</taxon>
        <taxon>Shewanella</taxon>
    </lineage>
</organism>
<reference key="1">
    <citation type="submission" date="2007-11" db="EMBL/GenBank/DDBJ databases">
        <title>Complete sequence of chromosome of Shewanella baltica OS195.</title>
        <authorList>
            <consortium name="US DOE Joint Genome Institute"/>
            <person name="Copeland A."/>
            <person name="Lucas S."/>
            <person name="Lapidus A."/>
            <person name="Barry K."/>
            <person name="Glavina del Rio T."/>
            <person name="Dalin E."/>
            <person name="Tice H."/>
            <person name="Pitluck S."/>
            <person name="Chain P."/>
            <person name="Malfatti S."/>
            <person name="Shin M."/>
            <person name="Vergez L."/>
            <person name="Schmutz J."/>
            <person name="Larimer F."/>
            <person name="Land M."/>
            <person name="Hauser L."/>
            <person name="Kyrpides N."/>
            <person name="Kim E."/>
            <person name="Brettar I."/>
            <person name="Rodrigues J."/>
            <person name="Konstantinidis K."/>
            <person name="Klappenbach J."/>
            <person name="Hofle M."/>
            <person name="Tiedje J."/>
            <person name="Richardson P."/>
        </authorList>
    </citation>
    <scope>NUCLEOTIDE SEQUENCE [LARGE SCALE GENOMIC DNA]</scope>
    <source>
        <strain>OS195</strain>
    </source>
</reference>
<keyword id="KW-0963">Cytoplasm</keyword>
<keyword id="KW-0488">Methylation</keyword>
<keyword id="KW-0648">Protein biosynthesis</keyword>
<proteinExistence type="inferred from homology"/>
<sequence length="363" mass="40491">MKESVIRKLEGLLERNEEVMALLGDASVISDQDRFRALSKEYAQLEDVVAGFKAYQQAQVDLDSAKEMLEEDDAEMREMAQEEMKAAKAKLEHLEDELQILLLPKDPDDDKNAFVEIRAGAGGDEAAIFAGDLFRMYSRYAEANRWQIEIMSCNEGEHGGFKEVIMKVSGDGVYGKLKFESGGHRVQRVPETESQGRVHTSAVTVVVLHEVPEAEAISINPADLKVDTFRSSGAGGQHVNKTDSAIRITHIPTGIVVECQDQRSQHKNRAQAMSVLAARIQAVEDEKRRSAEESTRRSLVASGDRSERVRTYNFPQGRVSEHRINLTLYRLNEVMEGDLDAILLPLMQEHQADQLAALADEQG</sequence>
<protein>
    <recommendedName>
        <fullName evidence="1">Peptide chain release factor 1</fullName>
        <shortName evidence="1">RF-1</shortName>
    </recommendedName>
</protein>
<evidence type="ECO:0000255" key="1">
    <source>
        <dbReference type="HAMAP-Rule" id="MF_00093"/>
    </source>
</evidence>
<evidence type="ECO:0000256" key="2">
    <source>
        <dbReference type="SAM" id="MobiDB-lite"/>
    </source>
</evidence>
<gene>
    <name evidence="1" type="primary">prfA</name>
    <name type="ordered locus">Sbal195_3737</name>
</gene>
<feature type="chain" id="PRO_1000075514" description="Peptide chain release factor 1">
    <location>
        <begin position="1"/>
        <end position="363"/>
    </location>
</feature>
<feature type="region of interest" description="Disordered" evidence="2">
    <location>
        <begin position="284"/>
        <end position="305"/>
    </location>
</feature>
<feature type="compositionally biased region" description="Basic and acidic residues" evidence="2">
    <location>
        <begin position="284"/>
        <end position="296"/>
    </location>
</feature>
<feature type="modified residue" description="N5-methylglutamine" evidence="1">
    <location>
        <position position="237"/>
    </location>
</feature>
<accession>A9L2D4</accession>